<accession>A7X1P3</accession>
<feature type="chain" id="PRO_1000069163" description="Proline--tRNA ligase">
    <location>
        <begin position="1"/>
        <end position="567"/>
    </location>
</feature>
<gene>
    <name evidence="1" type="primary">proS</name>
    <name type="ordered locus">SAHV_1253</name>
</gene>
<proteinExistence type="inferred from homology"/>
<evidence type="ECO:0000255" key="1">
    <source>
        <dbReference type="HAMAP-Rule" id="MF_01569"/>
    </source>
</evidence>
<reference key="1">
    <citation type="journal article" date="2008" name="Antimicrob. Agents Chemother.">
        <title>Mutated response regulator graR is responsible for phenotypic conversion of Staphylococcus aureus from heterogeneous vancomycin-intermediate resistance to vancomycin-intermediate resistance.</title>
        <authorList>
            <person name="Neoh H.-M."/>
            <person name="Cui L."/>
            <person name="Yuzawa H."/>
            <person name="Takeuchi F."/>
            <person name="Matsuo M."/>
            <person name="Hiramatsu K."/>
        </authorList>
    </citation>
    <scope>NUCLEOTIDE SEQUENCE [LARGE SCALE GENOMIC DNA]</scope>
    <source>
        <strain>Mu3 / ATCC 700698</strain>
    </source>
</reference>
<name>SYP_STAA1</name>
<protein>
    <recommendedName>
        <fullName evidence="1">Proline--tRNA ligase</fullName>
        <ecNumber evidence="1">6.1.1.15</ecNumber>
    </recommendedName>
    <alternativeName>
        <fullName evidence="1">Prolyl-tRNA synthetase</fullName>
        <shortName evidence="1">ProRS</shortName>
    </alternativeName>
</protein>
<sequence>MKQSKVFIPTMRDVPSEAEAQSHRLLLKSGLIKQSTSGIYSYLPLATRVLNNITAIVRQEMERIDSVEILMPALQQAELWEESGRWGAYGPELMRLQDRHGRQFALGPTHEELVTSIVRNELKSYKQLPMTLFQIQSKFRDEKRPRFGLLRGREFIMKDAYSFHADEASLDQTYQDMYQAYSRIFERVGINARPVVADSGAIGGSHTHEFMALSAIGEDTIVYSKESDYAANIEKAEVVYEPNHKHSTVQPLEKIETPNVKTAQELADFLGRPVDEIVKTMIFKVDGEYIMVLVRGHHEINDIKLKSYFGTDNIELATQDEIVNLVGANPGSLGPVIDKEIKIYADNFVQDLNNLVVGANEDGYHLINVNVGRDFNVDEYGDFRFILEGEKLSDGSGVAHFAEGIEVGQVFKLGTKYSESMNATFLDNQGKAQPLIMGCYGIGISRTLSAIVEQNHDDNGIVWPKSVTPFDLHLISINPKKDDQRELADALYAEFNTKFDVLYDDRQERAGVKFNDADLIGLPLRIVVGKRASEGIVEVKERLTGDSEEVHIDDLMTVITNKYDNLK</sequence>
<dbReference type="EC" id="6.1.1.15" evidence="1"/>
<dbReference type="EMBL" id="AP009324">
    <property type="protein sequence ID" value="BAF78136.1"/>
    <property type="molecule type" value="Genomic_DNA"/>
</dbReference>
<dbReference type="RefSeq" id="WP_000814094.1">
    <property type="nucleotide sequence ID" value="NC_009782.1"/>
</dbReference>
<dbReference type="SMR" id="A7X1P3"/>
<dbReference type="KEGG" id="saw:SAHV_1253"/>
<dbReference type="HOGENOM" id="CLU_016739_0_0_9"/>
<dbReference type="GO" id="GO:0005829">
    <property type="term" value="C:cytosol"/>
    <property type="evidence" value="ECO:0007669"/>
    <property type="project" value="TreeGrafter"/>
</dbReference>
<dbReference type="GO" id="GO:0002161">
    <property type="term" value="F:aminoacyl-tRNA deacylase activity"/>
    <property type="evidence" value="ECO:0007669"/>
    <property type="project" value="InterPro"/>
</dbReference>
<dbReference type="GO" id="GO:0005524">
    <property type="term" value="F:ATP binding"/>
    <property type="evidence" value="ECO:0007669"/>
    <property type="project" value="UniProtKB-UniRule"/>
</dbReference>
<dbReference type="GO" id="GO:0140096">
    <property type="term" value="F:catalytic activity, acting on a protein"/>
    <property type="evidence" value="ECO:0007669"/>
    <property type="project" value="UniProtKB-ARBA"/>
</dbReference>
<dbReference type="GO" id="GO:0004827">
    <property type="term" value="F:proline-tRNA ligase activity"/>
    <property type="evidence" value="ECO:0007669"/>
    <property type="project" value="UniProtKB-UniRule"/>
</dbReference>
<dbReference type="GO" id="GO:0016740">
    <property type="term" value="F:transferase activity"/>
    <property type="evidence" value="ECO:0007669"/>
    <property type="project" value="UniProtKB-ARBA"/>
</dbReference>
<dbReference type="GO" id="GO:0006433">
    <property type="term" value="P:prolyl-tRNA aminoacylation"/>
    <property type="evidence" value="ECO:0007669"/>
    <property type="project" value="UniProtKB-UniRule"/>
</dbReference>
<dbReference type="CDD" id="cd04334">
    <property type="entry name" value="ProRS-INS"/>
    <property type="match status" value="1"/>
</dbReference>
<dbReference type="CDD" id="cd00861">
    <property type="entry name" value="ProRS_anticodon_short"/>
    <property type="match status" value="1"/>
</dbReference>
<dbReference type="CDD" id="cd00779">
    <property type="entry name" value="ProRS_core_prok"/>
    <property type="match status" value="1"/>
</dbReference>
<dbReference type="FunFam" id="3.30.930.10:FF:000043">
    <property type="entry name" value="Proline--tRNA ligase"/>
    <property type="match status" value="1"/>
</dbReference>
<dbReference type="FunFam" id="3.40.50.800:FF:000011">
    <property type="entry name" value="Proline--tRNA ligase"/>
    <property type="match status" value="1"/>
</dbReference>
<dbReference type="Gene3D" id="3.40.50.800">
    <property type="entry name" value="Anticodon-binding domain"/>
    <property type="match status" value="1"/>
</dbReference>
<dbReference type="Gene3D" id="3.30.930.10">
    <property type="entry name" value="Bira Bifunctional Protein, Domain 2"/>
    <property type="match status" value="2"/>
</dbReference>
<dbReference type="Gene3D" id="3.90.960.10">
    <property type="entry name" value="YbaK/aminoacyl-tRNA synthetase-associated domain"/>
    <property type="match status" value="1"/>
</dbReference>
<dbReference type="HAMAP" id="MF_01569">
    <property type="entry name" value="Pro_tRNA_synth_type1"/>
    <property type="match status" value="1"/>
</dbReference>
<dbReference type="InterPro" id="IPR002314">
    <property type="entry name" value="aa-tRNA-synt_IIb"/>
</dbReference>
<dbReference type="InterPro" id="IPR006195">
    <property type="entry name" value="aa-tRNA-synth_II"/>
</dbReference>
<dbReference type="InterPro" id="IPR045864">
    <property type="entry name" value="aa-tRNA-synth_II/BPL/LPL"/>
</dbReference>
<dbReference type="InterPro" id="IPR004154">
    <property type="entry name" value="Anticodon-bd"/>
</dbReference>
<dbReference type="InterPro" id="IPR036621">
    <property type="entry name" value="Anticodon-bd_dom_sf"/>
</dbReference>
<dbReference type="InterPro" id="IPR002316">
    <property type="entry name" value="Pro-tRNA-ligase_IIa"/>
</dbReference>
<dbReference type="InterPro" id="IPR004500">
    <property type="entry name" value="Pro-tRNA-synth_IIa_bac-type"/>
</dbReference>
<dbReference type="InterPro" id="IPR023717">
    <property type="entry name" value="Pro-tRNA-Synthase_IIa_type1"/>
</dbReference>
<dbReference type="InterPro" id="IPR050062">
    <property type="entry name" value="Pro-tRNA_synthetase"/>
</dbReference>
<dbReference type="InterPro" id="IPR044140">
    <property type="entry name" value="ProRS_anticodon_short"/>
</dbReference>
<dbReference type="InterPro" id="IPR033730">
    <property type="entry name" value="ProRS_core_prok"/>
</dbReference>
<dbReference type="InterPro" id="IPR036754">
    <property type="entry name" value="YbaK/aa-tRNA-synt-asso_dom_sf"/>
</dbReference>
<dbReference type="InterPro" id="IPR007214">
    <property type="entry name" value="YbaK/aa-tRNA-synth-assoc-dom"/>
</dbReference>
<dbReference type="NCBIfam" id="NF006625">
    <property type="entry name" value="PRK09194.1"/>
    <property type="match status" value="1"/>
</dbReference>
<dbReference type="NCBIfam" id="TIGR00409">
    <property type="entry name" value="proS_fam_II"/>
    <property type="match status" value="1"/>
</dbReference>
<dbReference type="PANTHER" id="PTHR42753">
    <property type="entry name" value="MITOCHONDRIAL RIBOSOME PROTEIN L39/PROLYL-TRNA LIGASE FAMILY MEMBER"/>
    <property type="match status" value="1"/>
</dbReference>
<dbReference type="PANTHER" id="PTHR42753:SF2">
    <property type="entry name" value="PROLINE--TRNA LIGASE"/>
    <property type="match status" value="1"/>
</dbReference>
<dbReference type="Pfam" id="PF03129">
    <property type="entry name" value="HGTP_anticodon"/>
    <property type="match status" value="1"/>
</dbReference>
<dbReference type="Pfam" id="PF00587">
    <property type="entry name" value="tRNA-synt_2b"/>
    <property type="match status" value="1"/>
</dbReference>
<dbReference type="Pfam" id="PF04073">
    <property type="entry name" value="tRNA_edit"/>
    <property type="match status" value="1"/>
</dbReference>
<dbReference type="PRINTS" id="PR01046">
    <property type="entry name" value="TRNASYNTHPRO"/>
</dbReference>
<dbReference type="SUPFAM" id="SSF52954">
    <property type="entry name" value="Class II aaRS ABD-related"/>
    <property type="match status" value="1"/>
</dbReference>
<dbReference type="SUPFAM" id="SSF55681">
    <property type="entry name" value="Class II aaRS and biotin synthetases"/>
    <property type="match status" value="1"/>
</dbReference>
<dbReference type="SUPFAM" id="SSF55826">
    <property type="entry name" value="YbaK/ProRS associated domain"/>
    <property type="match status" value="1"/>
</dbReference>
<dbReference type="PROSITE" id="PS50862">
    <property type="entry name" value="AA_TRNA_LIGASE_II"/>
    <property type="match status" value="1"/>
</dbReference>
<comment type="function">
    <text evidence="1">Catalyzes the attachment of proline to tRNA(Pro) in a two-step reaction: proline is first activated by ATP to form Pro-AMP and then transferred to the acceptor end of tRNA(Pro). As ProRS can inadvertently accommodate and process non-cognate amino acids such as alanine and cysteine, to avoid such errors it has two additional distinct editing activities against alanine. One activity is designated as 'pretransfer' editing and involves the tRNA(Pro)-independent hydrolysis of activated Ala-AMP. The other activity is designated 'posttransfer' editing and involves deacylation of mischarged Ala-tRNA(Pro). The misacylated Cys-tRNA(Pro) is not edited by ProRS.</text>
</comment>
<comment type="catalytic activity">
    <reaction evidence="1">
        <text>tRNA(Pro) + L-proline + ATP = L-prolyl-tRNA(Pro) + AMP + diphosphate</text>
        <dbReference type="Rhea" id="RHEA:14305"/>
        <dbReference type="Rhea" id="RHEA-COMP:9700"/>
        <dbReference type="Rhea" id="RHEA-COMP:9702"/>
        <dbReference type="ChEBI" id="CHEBI:30616"/>
        <dbReference type="ChEBI" id="CHEBI:33019"/>
        <dbReference type="ChEBI" id="CHEBI:60039"/>
        <dbReference type="ChEBI" id="CHEBI:78442"/>
        <dbReference type="ChEBI" id="CHEBI:78532"/>
        <dbReference type="ChEBI" id="CHEBI:456215"/>
        <dbReference type="EC" id="6.1.1.15"/>
    </reaction>
</comment>
<comment type="subunit">
    <text evidence="1">Homodimer.</text>
</comment>
<comment type="subcellular location">
    <subcellularLocation>
        <location evidence="1">Cytoplasm</location>
    </subcellularLocation>
</comment>
<comment type="domain">
    <text evidence="1">Consists of three domains: the N-terminal catalytic domain, the editing domain and the C-terminal anticodon-binding domain.</text>
</comment>
<comment type="similarity">
    <text evidence="1">Belongs to the class-II aminoacyl-tRNA synthetase family. ProS type 1 subfamily.</text>
</comment>
<organism>
    <name type="scientific">Staphylococcus aureus (strain Mu3 / ATCC 700698)</name>
    <dbReference type="NCBI Taxonomy" id="418127"/>
    <lineage>
        <taxon>Bacteria</taxon>
        <taxon>Bacillati</taxon>
        <taxon>Bacillota</taxon>
        <taxon>Bacilli</taxon>
        <taxon>Bacillales</taxon>
        <taxon>Staphylococcaceae</taxon>
        <taxon>Staphylococcus</taxon>
    </lineage>
</organism>
<keyword id="KW-0030">Aminoacyl-tRNA synthetase</keyword>
<keyword id="KW-0067">ATP-binding</keyword>
<keyword id="KW-0963">Cytoplasm</keyword>
<keyword id="KW-0436">Ligase</keyword>
<keyword id="KW-0547">Nucleotide-binding</keyword>
<keyword id="KW-0648">Protein biosynthesis</keyword>